<organism>
    <name type="scientific">Saccharomyces cerevisiae (strain ATCC 204508 / S288c)</name>
    <name type="common">Baker's yeast</name>
    <dbReference type="NCBI Taxonomy" id="559292"/>
    <lineage>
        <taxon>Eukaryota</taxon>
        <taxon>Fungi</taxon>
        <taxon>Dikarya</taxon>
        <taxon>Ascomycota</taxon>
        <taxon>Saccharomycotina</taxon>
        <taxon>Saccharomycetes</taxon>
        <taxon>Saccharomycetales</taxon>
        <taxon>Saccharomycetaceae</taxon>
        <taxon>Saccharomyces</taxon>
    </lineage>
</organism>
<name>PHR_YEAST</name>
<comment type="function">
    <text>Involved in repair of UV radiation-induced DNA damage. Catalyzes the light-dependent monomerization (300-600 nm) of cyclobutyl pyrimidine dimers (in cis-syn configuration), which are formed between adjacent bases on the same DNA strand upon exposure to ultraviolet radiation.</text>
</comment>
<comment type="catalytic activity">
    <reaction>
        <text>cyclobutadipyrimidine (in DNA) = 2 pyrimidine residues (in DNA).</text>
        <dbReference type="EC" id="4.1.99.3"/>
    </reaction>
</comment>
<comment type="cofactor">
    <cofactor>
        <name>FAD</name>
        <dbReference type="ChEBI" id="CHEBI:57692"/>
    </cofactor>
    <text>Binds 1 FAD per subunit.</text>
</comment>
<comment type="cofactor">
    <cofactor>
        <name>(6R)-5,10-methylene-5,6,7,8-tetrahydrofolate</name>
        <dbReference type="ChEBI" id="CHEBI:15636"/>
    </cofactor>
    <text>Binds 1 5,10-methenyltetrahydrofolate (MTHF) non-covalently per subunit.</text>
</comment>
<comment type="biophysicochemical properties">
    <absorption>
        <max>377 nm</max>
        <text>Has a fluorescence excitation maximum at 390 nm and an emission maximum at 475 nm.</text>
    </absorption>
</comment>
<comment type="subunit">
    <text evidence="1">Monomer.</text>
</comment>
<comment type="subcellular location">
    <subcellularLocation>
        <location>Nucleus</location>
    </subcellularLocation>
    <subcellularLocation>
        <location>Mitochondrion</location>
    </subcellularLocation>
</comment>
<comment type="miscellaneous">
    <text>There are only 150-300 molecules of photolyase per yeast cell.</text>
</comment>
<comment type="miscellaneous">
    <text evidence="2">Present with 688 molecules/cell in log phase SD medium.</text>
</comment>
<comment type="similarity">
    <text evidence="4">Belongs to the DNA photolyase class-1 family.</text>
</comment>
<keyword id="KW-0157">Chromophore</keyword>
<keyword id="KW-0227">DNA damage</keyword>
<keyword id="KW-0234">DNA repair</keyword>
<keyword id="KW-0238">DNA-binding</keyword>
<keyword id="KW-0274">FAD</keyword>
<keyword id="KW-0285">Flavoprotein</keyword>
<keyword id="KW-0456">Lyase</keyword>
<keyword id="KW-0496">Mitochondrion</keyword>
<keyword id="KW-0547">Nucleotide-binding</keyword>
<keyword id="KW-0539">Nucleus</keyword>
<keyword id="KW-1185">Reference proteome</keyword>
<keyword id="KW-0809">Transit peptide</keyword>
<gene>
    <name type="primary">PHR1</name>
    <name type="ordered locus">YOR386W</name>
</gene>
<reference key="1">
    <citation type="journal article" date="1985" name="Nucleic Acids Res.">
        <title>Sequence of the Saccharomyces cerevisiae PHR1 gene and homology of the PHR1 photolyase to E. coli photolyase.</title>
        <authorList>
            <person name="Sancar G.B."/>
        </authorList>
    </citation>
    <scope>NUCLEOTIDE SEQUENCE [GENOMIC DNA]</scope>
</reference>
<reference key="2">
    <citation type="journal article" date="1985" name="Gene">
        <title>Homology between the photoreactivation genes of Saccharomyces cerevisiae and Escherichia coli.</title>
        <authorList>
            <person name="Yasui A."/>
            <person name="Langeveld S.A."/>
        </authorList>
    </citation>
    <scope>NUCLEOTIDE SEQUENCE [GENOMIC DNA]</scope>
</reference>
<reference key="3">
    <citation type="journal article" date="1987" name="J. Biol. Chem.">
        <title>Purification of the yeast PHR1 photolyase from an Escherichia coli overproducing strain and characterization of the intrinsic chromophores of the enzyme.</title>
        <authorList>
            <person name="Sancar G.B."/>
            <person name="Smith F.W."/>
            <person name="Heelis P.F."/>
        </authorList>
    </citation>
    <scope>CHARACTERIZATION</scope>
</reference>
<reference key="4">
    <citation type="journal article" date="1997" name="Nature">
        <title>The nucleotide sequence of Saccharomyces cerevisiae chromosome XV.</title>
        <authorList>
            <person name="Dujon B."/>
            <person name="Albermann K."/>
            <person name="Aldea M."/>
            <person name="Alexandraki D."/>
            <person name="Ansorge W."/>
            <person name="Arino J."/>
            <person name="Benes V."/>
            <person name="Bohn C."/>
            <person name="Bolotin-Fukuhara M."/>
            <person name="Bordonne R."/>
            <person name="Boyer J."/>
            <person name="Camasses A."/>
            <person name="Casamayor A."/>
            <person name="Casas C."/>
            <person name="Cheret G."/>
            <person name="Cziepluch C."/>
            <person name="Daignan-Fornier B."/>
            <person name="Dang V.-D."/>
            <person name="de Haan M."/>
            <person name="Delius H."/>
            <person name="Durand P."/>
            <person name="Fairhead C."/>
            <person name="Feldmann H."/>
            <person name="Gaillon L."/>
            <person name="Galisson F."/>
            <person name="Gamo F.-J."/>
            <person name="Gancedo C."/>
            <person name="Goffeau A."/>
            <person name="Goulding S.E."/>
            <person name="Grivell L.A."/>
            <person name="Habbig B."/>
            <person name="Hand N.J."/>
            <person name="Hani J."/>
            <person name="Hattenhorst U."/>
            <person name="Hebling U."/>
            <person name="Hernando Y."/>
            <person name="Herrero E."/>
            <person name="Heumann K."/>
            <person name="Hiesel R."/>
            <person name="Hilger F."/>
            <person name="Hofmann B."/>
            <person name="Hollenberg C.P."/>
            <person name="Hughes B."/>
            <person name="Jauniaux J.-C."/>
            <person name="Kalogeropoulos A."/>
            <person name="Katsoulou C."/>
            <person name="Kordes E."/>
            <person name="Lafuente M.J."/>
            <person name="Landt O."/>
            <person name="Louis E.J."/>
            <person name="Maarse A.C."/>
            <person name="Madania A."/>
            <person name="Mannhaupt G."/>
            <person name="Marck C."/>
            <person name="Martin R.P."/>
            <person name="Mewes H.-W."/>
            <person name="Michaux G."/>
            <person name="Paces V."/>
            <person name="Parle-McDermott A.G."/>
            <person name="Pearson B.M."/>
            <person name="Perrin A."/>
            <person name="Pettersson B."/>
            <person name="Poch O."/>
            <person name="Pohl T.M."/>
            <person name="Poirey R."/>
            <person name="Portetelle D."/>
            <person name="Pujol A."/>
            <person name="Purnelle B."/>
            <person name="Ramezani Rad M."/>
            <person name="Rechmann S."/>
            <person name="Schwager C."/>
            <person name="Schweizer M."/>
            <person name="Sor F."/>
            <person name="Sterky F."/>
            <person name="Tarassov I.A."/>
            <person name="Teodoru C."/>
            <person name="Tettelin H."/>
            <person name="Thierry A."/>
            <person name="Tobiasch E."/>
            <person name="Tzermia M."/>
            <person name="Uhlen M."/>
            <person name="Unseld M."/>
            <person name="Valens M."/>
            <person name="Vandenbol M."/>
            <person name="Vetter I."/>
            <person name="Vlcek C."/>
            <person name="Voet M."/>
            <person name="Volckaert G."/>
            <person name="Voss H."/>
            <person name="Wambutt R."/>
            <person name="Wedler H."/>
            <person name="Wiemann S."/>
            <person name="Winsor B."/>
            <person name="Wolfe K.H."/>
            <person name="Zollner A."/>
            <person name="Zumstein E."/>
            <person name="Kleine K."/>
        </authorList>
    </citation>
    <scope>NUCLEOTIDE SEQUENCE [LARGE SCALE GENOMIC DNA]</scope>
    <source>
        <strain>ATCC 204508 / S288c</strain>
    </source>
</reference>
<reference key="5">
    <citation type="journal article" date="2014" name="G3 (Bethesda)">
        <title>The reference genome sequence of Saccharomyces cerevisiae: Then and now.</title>
        <authorList>
            <person name="Engel S.R."/>
            <person name="Dietrich F.S."/>
            <person name="Fisk D.G."/>
            <person name="Binkley G."/>
            <person name="Balakrishnan R."/>
            <person name="Costanzo M.C."/>
            <person name="Dwight S.S."/>
            <person name="Hitz B.C."/>
            <person name="Karra K."/>
            <person name="Nash R.S."/>
            <person name="Weng S."/>
            <person name="Wong E.D."/>
            <person name="Lloyd P."/>
            <person name="Skrzypek M.S."/>
            <person name="Miyasato S.R."/>
            <person name="Simison M."/>
            <person name="Cherry J.M."/>
        </authorList>
    </citation>
    <scope>GENOME REANNOTATION</scope>
    <source>
        <strain>ATCC 204508 / S288c</strain>
    </source>
</reference>
<reference key="6">
    <citation type="journal article" date="1993" name="J. Biol. Chem.">
        <title>The role of conserved amino acids in substrate binding and discrimination by photolyase.</title>
        <authorList>
            <person name="Baer M.E."/>
            <person name="Sancar G.B."/>
        </authorList>
    </citation>
    <scope>MUTAGENESIS OF TRP-387; LYS-463 AND ARG-507</scope>
</reference>
<reference key="7">
    <citation type="journal article" date="2003" name="Nature">
        <title>Global analysis of protein expression in yeast.</title>
        <authorList>
            <person name="Ghaemmaghami S."/>
            <person name="Huh W.-K."/>
            <person name="Bower K."/>
            <person name="Howson R.W."/>
            <person name="Belle A."/>
            <person name="Dephoure N."/>
            <person name="O'Shea E.K."/>
            <person name="Weissman J.S."/>
        </authorList>
    </citation>
    <scope>LEVEL OF PROTEIN EXPRESSION [LARGE SCALE ANALYSIS]</scope>
</reference>
<reference key="8">
    <citation type="journal article" date="2005" name="Biochim. Biophys. Acta">
        <title>Light-driven enzymatic catalysis of DNA repair: a review of recent biophysical studies on photolyase.</title>
        <authorList>
            <person name="Weber S."/>
        </authorList>
    </citation>
    <scope>REVIEW</scope>
</reference>
<feature type="transit peptide" description="Mitochondrion">
    <location>
        <begin position="1"/>
        <end status="unknown"/>
    </location>
</feature>
<feature type="chain" id="PRO_0000024051" description="Deoxyribodipyrimidine photo-lyase, mitochondrial">
    <location>
        <begin status="unknown"/>
        <end position="565"/>
    </location>
</feature>
<feature type="domain" description="Photolyase/cryptochrome alpha/beta">
    <location>
        <begin position="75"/>
        <end position="226"/>
    </location>
</feature>
<feature type="region of interest" description="Interaction with DNA" evidence="1">
    <location>
        <begin position="384"/>
        <end position="391"/>
    </location>
</feature>
<feature type="region of interest" description="Interaction with DNA" evidence="1">
    <location>
        <begin position="451"/>
        <end position="452"/>
    </location>
</feature>
<feature type="binding site" evidence="1">
    <location>
        <position position="326"/>
    </location>
    <ligand>
        <name>FAD</name>
        <dbReference type="ChEBI" id="CHEBI:57692"/>
    </ligand>
</feature>
<feature type="binding site" evidence="1">
    <location>
        <begin position="338"/>
        <end position="342"/>
    </location>
    <ligand>
        <name>FAD</name>
        <dbReference type="ChEBI" id="CHEBI:57692"/>
    </ligand>
</feature>
<feature type="binding site" evidence="1">
    <location>
        <begin position="482"/>
        <end position="484"/>
    </location>
    <ligand>
        <name>FAD</name>
        <dbReference type="ChEBI" id="CHEBI:57692"/>
    </ligand>
</feature>
<feature type="binding site" evidence="1">
    <location>
        <position position="514"/>
    </location>
    <ligand>
        <name>DNA</name>
        <dbReference type="ChEBI" id="CHEBI:16991"/>
    </ligand>
</feature>
<feature type="site" description="Electron transfer via tryptophanyl radical" evidence="1">
    <location>
        <position position="416"/>
    </location>
</feature>
<feature type="site" description="Electron transfer via tryptophanyl radical" evidence="1">
    <location>
        <position position="469"/>
    </location>
</feature>
<feature type="site" description="Electron transfer via tryptophanyl radical" evidence="1">
    <location>
        <position position="492"/>
    </location>
</feature>
<feature type="mutagenesis site" description="Reduces substrate binding 100-fold. Reduces quantum yield for dimer photolysis 3-fold." evidence="3">
    <original>W</original>
    <variation>A</variation>
    <location>
        <position position="387"/>
    </location>
</feature>
<feature type="mutagenesis site" description="Reduces substrate binding 100-fold." evidence="3">
    <original>K</original>
    <variation>A</variation>
    <location>
        <position position="463"/>
    </location>
</feature>
<feature type="mutagenesis site" description="Reduces substrate binding 100-fold." evidence="3">
    <original>R</original>
    <variation>A</variation>
    <location>
        <position position="507"/>
    </location>
</feature>
<feature type="mutagenesis site" description="Reduces substrate binding 10-fold.">
    <original>K</original>
    <variation>A</variation>
    <location>
        <position position="517"/>
    </location>
</feature>
<feature type="sequence conflict" description="In Ref. 2; AAA34875." evidence="4" ref="2">
    <original>V</original>
    <variation>A</variation>
    <location>
        <position position="77"/>
    </location>
</feature>
<feature type="sequence conflict" description="In Ref. 2; AAA34875." evidence="4" ref="2">
    <original>T</original>
    <variation>S</variation>
    <location>
        <position position="165"/>
    </location>
</feature>
<feature type="sequence conflict" description="In Ref. 2; AAA34875." evidence="4" ref="2">
    <original>S</original>
    <variation>T</variation>
    <location>
        <position position="169"/>
    </location>
</feature>
<feature type="sequence conflict" description="In Ref. 2; AAA34875." evidence="4" ref="2">
    <original>D</original>
    <variation>S</variation>
    <location>
        <position position="200"/>
    </location>
</feature>
<feature type="sequence conflict" description="In Ref. 2; AAA34875." evidence="4" ref="2">
    <original>S</original>
    <variation>R</variation>
    <location>
        <position position="351"/>
    </location>
</feature>
<feature type="sequence conflict" description="In Ref. 2; AAA34875." evidence="4" ref="2">
    <original>G</original>
    <variation>E</variation>
    <location>
        <position position="365"/>
    </location>
</feature>
<feature type="sequence conflict" description="In Ref. 2; AAA34875." evidence="4" ref="2">
    <original>E</original>
    <variation>K</variation>
    <location>
        <position position="473"/>
    </location>
</feature>
<proteinExistence type="evidence at protein level"/>
<sequence>MKRTVISSSNAYASKRSRLDIEHDFEQYHSLNKKYYPRPITRTGANQFNNKSRAKPMEIVEKLQKKQKTSFENVSTVMHWFRNDLRLYDNVGLYKSVALFQQLRQKNAKAKLYAVYVINEDDWRAHMDSGWKLMFIMGALKNLQQSLAELHIPLLLWEFHTPKSTLSNSKEFVEFFKEKCMNVSSGTGTIITANIEYQTDELYRDIRLLENEDHRLQLKYYHDSCIVAPGLITTDRGTNYSVFTPWYKKWVLYVNNYKKSTSEICHLHIIEPLKYNETFELKPFQYSLPDEFLQYIPKSKWCLPDVSEEAALSRLKDFLGTKSSKYNNEKDMLYLGGTSGLSVYITTGRISTRLIVNQAFQSCNGQIMSKALKDNSSTQNFIKEVAWRDFYRHCMCNWPYTSMGMPYRLDTLDIKWENNPVAFEKWCTGNTGIPIVDAIMRKLLYTGYINNRSRMITASFLSKNLLIDWRWGERWFMKHLIDGDSSSNVGGWGFCSSTGIDAQPYFRVFNMDIQAKKYDPQMIFVKQWVPELISSENKRPENYPKPLVDLKHSRERALKVYKDAM</sequence>
<dbReference type="EC" id="4.1.99.3"/>
<dbReference type="EMBL" id="X03183">
    <property type="protein sequence ID" value="CAA26944.1"/>
    <property type="molecule type" value="Genomic_DNA"/>
</dbReference>
<dbReference type="EMBL" id="M11578">
    <property type="protein sequence ID" value="AAA34875.1"/>
    <property type="molecule type" value="Genomic_DNA"/>
</dbReference>
<dbReference type="EMBL" id="Z75294">
    <property type="protein sequence ID" value="CAA99718.1"/>
    <property type="molecule type" value="Genomic_DNA"/>
</dbReference>
<dbReference type="EMBL" id="BK006948">
    <property type="protein sequence ID" value="DAA11145.1"/>
    <property type="molecule type" value="Genomic_DNA"/>
</dbReference>
<dbReference type="PIR" id="S67298">
    <property type="entry name" value="S67298"/>
</dbReference>
<dbReference type="RefSeq" id="NP_015031.1">
    <property type="nucleotide sequence ID" value="NM_001183806.1"/>
</dbReference>
<dbReference type="SMR" id="P05066"/>
<dbReference type="BioGRID" id="34767">
    <property type="interactions" value="49"/>
</dbReference>
<dbReference type="DIP" id="DIP-6327N"/>
<dbReference type="FunCoup" id="P05066">
    <property type="interactions" value="411"/>
</dbReference>
<dbReference type="IntAct" id="P05066">
    <property type="interactions" value="29"/>
</dbReference>
<dbReference type="MINT" id="P05066"/>
<dbReference type="STRING" id="4932.YOR386W"/>
<dbReference type="iPTMnet" id="P05066"/>
<dbReference type="PaxDb" id="4932-YOR386W"/>
<dbReference type="PeptideAtlas" id="P05066"/>
<dbReference type="EnsemblFungi" id="YOR386W_mRNA">
    <property type="protein sequence ID" value="YOR386W"/>
    <property type="gene ID" value="YOR386W"/>
</dbReference>
<dbReference type="GeneID" id="854568"/>
<dbReference type="KEGG" id="sce:YOR386W"/>
<dbReference type="AGR" id="SGD:S000005913"/>
<dbReference type="SGD" id="S000005913">
    <property type="gene designation" value="PHR1"/>
</dbReference>
<dbReference type="VEuPathDB" id="FungiDB:YOR386W"/>
<dbReference type="eggNOG" id="KOG0133">
    <property type="taxonomic scope" value="Eukaryota"/>
</dbReference>
<dbReference type="GeneTree" id="ENSGT00940000166153"/>
<dbReference type="HOGENOM" id="CLU_010348_2_1_1"/>
<dbReference type="InParanoid" id="P05066"/>
<dbReference type="OMA" id="YTVFTPY"/>
<dbReference type="OrthoDB" id="435881at2759"/>
<dbReference type="BioCyc" id="YEAST:G3O-33848-MONOMER"/>
<dbReference type="BioGRID-ORCS" id="854568">
    <property type="hits" value="0 hits in 10 CRISPR screens"/>
</dbReference>
<dbReference type="PRO" id="PR:P05066"/>
<dbReference type="Proteomes" id="UP000002311">
    <property type="component" value="Chromosome XV"/>
</dbReference>
<dbReference type="RNAct" id="P05066">
    <property type="molecule type" value="protein"/>
</dbReference>
<dbReference type="GO" id="GO:0005737">
    <property type="term" value="C:cytoplasm"/>
    <property type="evidence" value="ECO:0007005"/>
    <property type="project" value="SGD"/>
</dbReference>
<dbReference type="GO" id="GO:0005739">
    <property type="term" value="C:mitochondrion"/>
    <property type="evidence" value="ECO:0007005"/>
    <property type="project" value="SGD"/>
</dbReference>
<dbReference type="GO" id="GO:0005634">
    <property type="term" value="C:nucleus"/>
    <property type="evidence" value="ECO:0007005"/>
    <property type="project" value="SGD"/>
</dbReference>
<dbReference type="GO" id="GO:0003904">
    <property type="term" value="F:deoxyribodipyrimidine photo-lyase activity"/>
    <property type="evidence" value="ECO:0000314"/>
    <property type="project" value="SGD"/>
</dbReference>
<dbReference type="GO" id="GO:0003677">
    <property type="term" value="F:DNA binding"/>
    <property type="evidence" value="ECO:0000318"/>
    <property type="project" value="GO_Central"/>
</dbReference>
<dbReference type="GO" id="GO:0071949">
    <property type="term" value="F:FAD binding"/>
    <property type="evidence" value="ECO:0000318"/>
    <property type="project" value="GO_Central"/>
</dbReference>
<dbReference type="GO" id="GO:0003729">
    <property type="term" value="F:mRNA binding"/>
    <property type="evidence" value="ECO:0000314"/>
    <property type="project" value="SGD"/>
</dbReference>
<dbReference type="GO" id="GO:0032922">
    <property type="term" value="P:circadian regulation of gene expression"/>
    <property type="evidence" value="ECO:0000318"/>
    <property type="project" value="GO_Central"/>
</dbReference>
<dbReference type="GO" id="GO:0043153">
    <property type="term" value="P:entrainment of circadian clock by photoperiod"/>
    <property type="evidence" value="ECO:0000318"/>
    <property type="project" value="GO_Central"/>
</dbReference>
<dbReference type="GO" id="GO:0000719">
    <property type="term" value="P:photoreactive repair"/>
    <property type="evidence" value="ECO:0000304"/>
    <property type="project" value="SGD"/>
</dbReference>
<dbReference type="Gene3D" id="1.25.40.80">
    <property type="match status" value="1"/>
</dbReference>
<dbReference type="Gene3D" id="1.10.579.10">
    <property type="entry name" value="DNA Cyclobutane Dipyrimidine Photolyase, subunit A, domain 3"/>
    <property type="match status" value="1"/>
</dbReference>
<dbReference type="Gene3D" id="3.40.50.620">
    <property type="entry name" value="HUPs"/>
    <property type="match status" value="1"/>
</dbReference>
<dbReference type="InterPro" id="IPR036134">
    <property type="entry name" value="Crypto/Photolyase_FAD-like_sf"/>
</dbReference>
<dbReference type="InterPro" id="IPR036155">
    <property type="entry name" value="Crypto/Photolyase_N_sf"/>
</dbReference>
<dbReference type="InterPro" id="IPR005101">
    <property type="entry name" value="Cryptochr/Photolyase_FAD-bd"/>
</dbReference>
<dbReference type="InterPro" id="IPR002081">
    <property type="entry name" value="Cryptochrome/DNA_photolyase_1"/>
</dbReference>
<dbReference type="InterPro" id="IPR018394">
    <property type="entry name" value="DNA_photolyase_1_CS_C"/>
</dbReference>
<dbReference type="InterPro" id="IPR006050">
    <property type="entry name" value="DNA_photolyase_N"/>
</dbReference>
<dbReference type="InterPro" id="IPR014729">
    <property type="entry name" value="Rossmann-like_a/b/a_fold"/>
</dbReference>
<dbReference type="PANTHER" id="PTHR11455">
    <property type="entry name" value="CRYPTOCHROME"/>
    <property type="match status" value="1"/>
</dbReference>
<dbReference type="PANTHER" id="PTHR11455:SF18">
    <property type="entry name" value="SI:CH1073-390K14.1"/>
    <property type="match status" value="1"/>
</dbReference>
<dbReference type="Pfam" id="PF00875">
    <property type="entry name" value="DNA_photolyase"/>
    <property type="match status" value="1"/>
</dbReference>
<dbReference type="Pfam" id="PF03441">
    <property type="entry name" value="FAD_binding_7"/>
    <property type="match status" value="1"/>
</dbReference>
<dbReference type="PRINTS" id="PR00147">
    <property type="entry name" value="DNAPHOTLYASE"/>
</dbReference>
<dbReference type="SUPFAM" id="SSF48173">
    <property type="entry name" value="Cryptochrome/photolyase FAD-binding domain"/>
    <property type="match status" value="1"/>
</dbReference>
<dbReference type="SUPFAM" id="SSF52425">
    <property type="entry name" value="Cryptochrome/photolyase, N-terminal domain"/>
    <property type="match status" value="1"/>
</dbReference>
<dbReference type="PROSITE" id="PS00394">
    <property type="entry name" value="DNA_PHOTOLYASES_1_1"/>
    <property type="match status" value="1"/>
</dbReference>
<dbReference type="PROSITE" id="PS00691">
    <property type="entry name" value="DNA_PHOTOLYASES_1_2"/>
    <property type="match status" value="1"/>
</dbReference>
<dbReference type="PROSITE" id="PS51645">
    <property type="entry name" value="PHR_CRY_ALPHA_BETA"/>
    <property type="match status" value="1"/>
</dbReference>
<protein>
    <recommendedName>
        <fullName>Deoxyribodipyrimidine photo-lyase, mitochondrial</fullName>
        <ecNumber>4.1.99.3</ecNumber>
    </recommendedName>
    <alternativeName>
        <fullName>DNA photolyase</fullName>
    </alternativeName>
    <alternativeName>
        <fullName>Photoreactivating enzyme</fullName>
    </alternativeName>
</protein>
<evidence type="ECO:0000250" key="1"/>
<evidence type="ECO:0000269" key="2">
    <source>
    </source>
</evidence>
<evidence type="ECO:0000269" key="3">
    <source>
    </source>
</evidence>
<evidence type="ECO:0000305" key="4"/>
<accession>P05066</accession>
<accession>D6W379</accession>